<sequence>MKATYNIQDYFLNQLRKDSVPTTVFLISGYQLRGLIKSFDNFTVILESEGKQQLIYKHAISTFAPARNVTLYEQETETEEVTR</sequence>
<feature type="chain" id="PRO_1000190332" description="RNA-binding protein Hfq">
    <location>
        <begin position="1"/>
        <end position="83"/>
    </location>
</feature>
<feature type="domain" description="Sm" evidence="2">
    <location>
        <begin position="9"/>
        <end position="69"/>
    </location>
</feature>
<dbReference type="EMBL" id="CP001022">
    <property type="protein sequence ID" value="ACB60558.1"/>
    <property type="molecule type" value="Genomic_DNA"/>
</dbReference>
<dbReference type="RefSeq" id="WP_012369981.1">
    <property type="nucleotide sequence ID" value="NC_010556.1"/>
</dbReference>
<dbReference type="SMR" id="B1YMH1"/>
<dbReference type="STRING" id="262543.Exig_1078"/>
<dbReference type="KEGG" id="esi:Exig_1078"/>
<dbReference type="eggNOG" id="COG1923">
    <property type="taxonomic scope" value="Bacteria"/>
</dbReference>
<dbReference type="HOGENOM" id="CLU_113688_0_2_9"/>
<dbReference type="OrthoDB" id="9799751at2"/>
<dbReference type="Proteomes" id="UP000001681">
    <property type="component" value="Chromosome"/>
</dbReference>
<dbReference type="GO" id="GO:0005829">
    <property type="term" value="C:cytosol"/>
    <property type="evidence" value="ECO:0007669"/>
    <property type="project" value="TreeGrafter"/>
</dbReference>
<dbReference type="GO" id="GO:0003723">
    <property type="term" value="F:RNA binding"/>
    <property type="evidence" value="ECO:0007669"/>
    <property type="project" value="UniProtKB-UniRule"/>
</dbReference>
<dbReference type="GO" id="GO:0006355">
    <property type="term" value="P:regulation of DNA-templated transcription"/>
    <property type="evidence" value="ECO:0007669"/>
    <property type="project" value="InterPro"/>
</dbReference>
<dbReference type="GO" id="GO:0043487">
    <property type="term" value="P:regulation of RNA stability"/>
    <property type="evidence" value="ECO:0007669"/>
    <property type="project" value="TreeGrafter"/>
</dbReference>
<dbReference type="GO" id="GO:0045974">
    <property type="term" value="P:regulation of translation, ncRNA-mediated"/>
    <property type="evidence" value="ECO:0007669"/>
    <property type="project" value="TreeGrafter"/>
</dbReference>
<dbReference type="CDD" id="cd01716">
    <property type="entry name" value="Hfq"/>
    <property type="match status" value="1"/>
</dbReference>
<dbReference type="FunFam" id="2.30.30.100:FF:000012">
    <property type="entry name" value="RNA-binding protein Hfq"/>
    <property type="match status" value="1"/>
</dbReference>
<dbReference type="Gene3D" id="2.30.30.100">
    <property type="match status" value="1"/>
</dbReference>
<dbReference type="HAMAP" id="MF_00436">
    <property type="entry name" value="Hfq"/>
    <property type="match status" value="1"/>
</dbReference>
<dbReference type="InterPro" id="IPR005001">
    <property type="entry name" value="Hfq"/>
</dbReference>
<dbReference type="InterPro" id="IPR010920">
    <property type="entry name" value="LSM_dom_sf"/>
</dbReference>
<dbReference type="InterPro" id="IPR047575">
    <property type="entry name" value="Sm"/>
</dbReference>
<dbReference type="NCBIfam" id="TIGR02383">
    <property type="entry name" value="Hfq"/>
    <property type="match status" value="1"/>
</dbReference>
<dbReference type="NCBIfam" id="NF001602">
    <property type="entry name" value="PRK00395.1"/>
    <property type="match status" value="1"/>
</dbReference>
<dbReference type="PANTHER" id="PTHR34772">
    <property type="entry name" value="RNA-BINDING PROTEIN HFQ"/>
    <property type="match status" value="1"/>
</dbReference>
<dbReference type="PANTHER" id="PTHR34772:SF1">
    <property type="entry name" value="RNA-BINDING PROTEIN HFQ"/>
    <property type="match status" value="1"/>
</dbReference>
<dbReference type="Pfam" id="PF17209">
    <property type="entry name" value="Hfq"/>
    <property type="match status" value="1"/>
</dbReference>
<dbReference type="SUPFAM" id="SSF50182">
    <property type="entry name" value="Sm-like ribonucleoproteins"/>
    <property type="match status" value="1"/>
</dbReference>
<dbReference type="PROSITE" id="PS52002">
    <property type="entry name" value="SM"/>
    <property type="match status" value="1"/>
</dbReference>
<keyword id="KW-1185">Reference proteome</keyword>
<keyword id="KW-0694">RNA-binding</keyword>
<keyword id="KW-0346">Stress response</keyword>
<protein>
    <recommendedName>
        <fullName evidence="1">RNA-binding protein Hfq</fullName>
    </recommendedName>
</protein>
<proteinExistence type="inferred from homology"/>
<name>HFQ_EXIS2</name>
<comment type="function">
    <text evidence="1">RNA chaperone that binds small regulatory RNA (sRNAs) and mRNAs to facilitate mRNA translational regulation in response to envelope stress, environmental stress and changes in metabolite concentrations. Also binds with high specificity to tRNAs.</text>
</comment>
<comment type="subunit">
    <text evidence="1">Homohexamer.</text>
</comment>
<comment type="similarity">
    <text evidence="1">Belongs to the Hfq family.</text>
</comment>
<accession>B1YMH1</accession>
<organism>
    <name type="scientific">Exiguobacterium sibiricum (strain DSM 17290 / CCUG 55495 / CIP 109462 / JCM 13490 / 255-15)</name>
    <dbReference type="NCBI Taxonomy" id="262543"/>
    <lineage>
        <taxon>Bacteria</taxon>
        <taxon>Bacillati</taxon>
        <taxon>Bacillota</taxon>
        <taxon>Bacilli</taxon>
        <taxon>Bacillales</taxon>
        <taxon>Bacillales Family XII. Incertae Sedis</taxon>
        <taxon>Exiguobacterium</taxon>
    </lineage>
</organism>
<evidence type="ECO:0000255" key="1">
    <source>
        <dbReference type="HAMAP-Rule" id="MF_00436"/>
    </source>
</evidence>
<evidence type="ECO:0000255" key="2">
    <source>
        <dbReference type="PROSITE-ProRule" id="PRU01346"/>
    </source>
</evidence>
<gene>
    <name evidence="1" type="primary">hfq</name>
    <name type="ordered locus">Exig_1078</name>
</gene>
<reference key="1">
    <citation type="submission" date="2008-04" db="EMBL/GenBank/DDBJ databases">
        <title>Complete sequence of chromosome of Exiguobacterium sibiricum 255-15.</title>
        <authorList>
            <consortium name="US DOE Joint Genome Institute"/>
            <person name="Copeland A."/>
            <person name="Lucas S."/>
            <person name="Lapidus A."/>
            <person name="Glavina del Rio T."/>
            <person name="Dalin E."/>
            <person name="Tice H."/>
            <person name="Bruce D."/>
            <person name="Goodwin L."/>
            <person name="Pitluck S."/>
            <person name="Kiss H."/>
            <person name="Chertkov O."/>
            <person name="Monk C."/>
            <person name="Brettin T."/>
            <person name="Detter J.C."/>
            <person name="Han C."/>
            <person name="Kuske C.R."/>
            <person name="Schmutz J."/>
            <person name="Larimer F."/>
            <person name="Land M."/>
            <person name="Hauser L."/>
            <person name="Kyrpides N."/>
            <person name="Mikhailova N."/>
            <person name="Vishnivetskaya T."/>
            <person name="Rodrigues D.F."/>
            <person name="Gilichinsky D."/>
            <person name="Tiedje J."/>
            <person name="Richardson P."/>
        </authorList>
    </citation>
    <scope>NUCLEOTIDE SEQUENCE [LARGE SCALE GENOMIC DNA]</scope>
    <source>
        <strain>DSM 17290 / CCUG 55495 / CIP 109462 / JCM 13490 / 255-15</strain>
    </source>
</reference>